<accession>F5C3T9</accession>
<name>COW_CONVR</name>
<evidence type="ECO:0000250" key="1">
    <source>
        <dbReference type="UniProtKB" id="P0C248"/>
    </source>
</evidence>
<evidence type="ECO:0000250" key="2">
    <source>
        <dbReference type="UniProtKB" id="P0C250"/>
    </source>
</evidence>
<evidence type="ECO:0000250" key="3">
    <source>
        <dbReference type="UniProtKB" id="P58786"/>
    </source>
</evidence>
<evidence type="ECO:0000250" key="4">
    <source>
        <dbReference type="UniProtKB" id="P58787"/>
    </source>
</evidence>
<evidence type="ECO:0000250" key="5">
    <source>
        <dbReference type="UniProtKB" id="P62903"/>
    </source>
</evidence>
<evidence type="ECO:0000250" key="6">
    <source>
        <dbReference type="UniProtKB" id="P83047"/>
    </source>
</evidence>
<evidence type="ECO:0000255" key="7"/>
<evidence type="ECO:0000305" key="8"/>
<evidence type="ECO:0000305" key="9">
    <source>
    </source>
</evidence>
<evidence type="ECO:0000312" key="10">
    <source>
        <dbReference type="EMBL" id="ADZ74135.1"/>
    </source>
</evidence>
<evidence type="ECO:0000312" key="11">
    <source>
        <dbReference type="EMBL" id="ADZ99322.1"/>
    </source>
</evidence>
<protein>
    <recommendedName>
        <fullName evidence="8">Contryphan-Vi</fullName>
    </recommendedName>
    <alternativeName>
        <fullName evidence="10 11">Contryphan-R-like</fullName>
    </alternativeName>
</protein>
<reference key="1">
    <citation type="journal article" date="2012" name="Toxicon">
        <title>Diversity and evolution of conotoxins in Conus virgo, Conus eburneus, Conus imperialis and Conus marmoreus from the South China Sea.</title>
        <authorList>
            <person name="Liu Z."/>
            <person name="Li H."/>
            <person name="Liu N."/>
            <person name="Wu C."/>
            <person name="Jiang J."/>
            <person name="Yue J."/>
            <person name="Jing Y."/>
            <person name="Dai Q."/>
        </authorList>
    </citation>
    <scope>NUCLEOTIDE SEQUENCE [MRNA]</scope>
    <source>
        <tissue>Venom duct</tissue>
    </source>
</reference>
<dbReference type="EMBL" id="JF322906">
    <property type="protein sequence ID" value="ADZ74135.1"/>
    <property type="molecule type" value="mRNA"/>
</dbReference>
<dbReference type="EMBL" id="JF460782">
    <property type="protein sequence ID" value="ADZ99322.1"/>
    <property type="molecule type" value="mRNA"/>
</dbReference>
<dbReference type="ConoServer" id="4516">
    <property type="toxin name" value="Contryphan-Vi precursor"/>
</dbReference>
<dbReference type="GO" id="GO:0005576">
    <property type="term" value="C:extracellular region"/>
    <property type="evidence" value="ECO:0007669"/>
    <property type="project" value="UniProtKB-SubCell"/>
</dbReference>
<dbReference type="GO" id="GO:0008200">
    <property type="term" value="F:ion channel inhibitor activity"/>
    <property type="evidence" value="ECO:0007669"/>
    <property type="project" value="InterPro"/>
</dbReference>
<dbReference type="GO" id="GO:0090729">
    <property type="term" value="F:toxin activity"/>
    <property type="evidence" value="ECO:0007669"/>
    <property type="project" value="UniProtKB-KW"/>
</dbReference>
<dbReference type="InterPro" id="IPR004214">
    <property type="entry name" value="Conotoxin"/>
</dbReference>
<dbReference type="InterPro" id="IPR011062">
    <property type="entry name" value="Contryphan_CS"/>
</dbReference>
<dbReference type="Pfam" id="PF02950">
    <property type="entry name" value="Conotoxin"/>
    <property type="match status" value="1"/>
</dbReference>
<dbReference type="PROSITE" id="PS60027">
    <property type="entry name" value="CONTRYPHAN"/>
    <property type="match status" value="1"/>
</dbReference>
<keyword id="KW-0027">Amidation</keyword>
<keyword id="KW-0208">D-amino acid</keyword>
<keyword id="KW-1015">Disulfide bond</keyword>
<keyword id="KW-0379">Hydroxylation</keyword>
<keyword id="KW-0872">Ion channel impairing toxin</keyword>
<keyword id="KW-0528">Neurotoxin</keyword>
<keyword id="KW-0964">Secreted</keyword>
<keyword id="KW-0732">Signal</keyword>
<keyword id="KW-0800">Toxin</keyword>
<proteinExistence type="inferred from homology"/>
<sequence>MGKLTILVLVAAVLLSTQVMVQGDGDQPADRNAVRRDDNPGGLSGKFMNVLRRSGCPWHPWCG</sequence>
<organism>
    <name type="scientific">Conus virgo</name>
    <name type="common">Virgin cone</name>
    <dbReference type="NCBI Taxonomy" id="89427"/>
    <lineage>
        <taxon>Eukaryota</taxon>
        <taxon>Metazoa</taxon>
        <taxon>Spiralia</taxon>
        <taxon>Lophotrochozoa</taxon>
        <taxon>Mollusca</taxon>
        <taxon>Gastropoda</taxon>
        <taxon>Caenogastropoda</taxon>
        <taxon>Neogastropoda</taxon>
        <taxon>Conoidea</taxon>
        <taxon>Conidae</taxon>
        <taxon>Conus</taxon>
        <taxon>Virgiconus</taxon>
    </lineage>
</organism>
<feature type="signal peptide" evidence="7">
    <location>
        <begin position="1"/>
        <end position="23"/>
    </location>
</feature>
<feature type="propeptide" id="PRO_0000445124" evidence="8">
    <location>
        <begin position="24"/>
        <end position="54"/>
    </location>
</feature>
<feature type="peptide" id="PRO_5007656944" description="Contryphan-Vi" evidence="8">
    <location>
        <begin position="55"/>
        <end position="62"/>
    </location>
</feature>
<feature type="modified residue" description="4-hydroxyproline" evidence="3">
    <location>
        <position position="57"/>
    </location>
</feature>
<feature type="modified residue" description="D-tryptophan" evidence="3">
    <location>
        <position position="58"/>
    </location>
</feature>
<feature type="modified residue" description="Cysteine amide" evidence="3">
    <location>
        <position position="62"/>
    </location>
</feature>
<feature type="disulfide bond" evidence="3">
    <location>
        <begin position="56"/>
        <end position="62"/>
    </location>
</feature>
<comment type="function">
    <text evidence="1 2 5 6">Its target is unknown, but this toxin may modulate voltage-activated calcium channels (Cav) or calcium-dependent potassium channels (KCa).</text>
</comment>
<comment type="subcellular location">
    <subcellularLocation>
        <location evidence="9">Secreted</location>
    </subcellularLocation>
</comment>
<comment type="tissue specificity">
    <text evidence="9">Expressed by the venom duct.</text>
</comment>
<comment type="domain">
    <text evidence="8">The cysteine framework is C-C.</text>
</comment>
<comment type="miscellaneous">
    <text evidence="4">Exists in two forms, due to cis-trans isomerization at 56-Cys-hydroxyPro-57. The cis conformation is the major form.</text>
</comment>
<comment type="similarity">
    <text evidence="8">Belongs to the O2 superfamily. Contryphan family.</text>
</comment>